<reference key="1">
    <citation type="journal article" date="2009" name="Infect. Immun.">
        <title>Comparative genomics reveal extensive transposon-mediated genomic plasticity and diversity among potential effector proteins within the genus Coxiella.</title>
        <authorList>
            <person name="Beare P.A."/>
            <person name="Unsworth N."/>
            <person name="Andoh M."/>
            <person name="Voth D.E."/>
            <person name="Omsland A."/>
            <person name="Gilk S.D."/>
            <person name="Williams K.P."/>
            <person name="Sobral B.W."/>
            <person name="Kupko J.J. III"/>
            <person name="Porcella S.F."/>
            <person name="Samuel J.E."/>
            <person name="Heinzen R.A."/>
        </authorList>
    </citation>
    <scope>NUCLEOTIDE SEQUENCE [LARGE SCALE GENOMIC DNA]</scope>
    <source>
        <strain>CbuG_Q212</strain>
    </source>
</reference>
<proteinExistence type="inferred from homology"/>
<comment type="function">
    <text evidence="1">Catalyzes the last two sequential reactions in the de novo biosynthetic pathway for UDP-N-acetylglucosamine (UDP-GlcNAc). The C-terminal domain catalyzes the transfer of acetyl group from acetyl coenzyme A to glucosamine-1-phosphate (GlcN-1-P) to produce N-acetylglucosamine-1-phosphate (GlcNAc-1-P), which is converted into UDP-GlcNAc by the transfer of uridine 5-monophosphate (from uridine 5-triphosphate), a reaction catalyzed by the N-terminal domain.</text>
</comment>
<comment type="catalytic activity">
    <reaction evidence="1">
        <text>alpha-D-glucosamine 1-phosphate + acetyl-CoA = N-acetyl-alpha-D-glucosamine 1-phosphate + CoA + H(+)</text>
        <dbReference type="Rhea" id="RHEA:13725"/>
        <dbReference type="ChEBI" id="CHEBI:15378"/>
        <dbReference type="ChEBI" id="CHEBI:57287"/>
        <dbReference type="ChEBI" id="CHEBI:57288"/>
        <dbReference type="ChEBI" id="CHEBI:57776"/>
        <dbReference type="ChEBI" id="CHEBI:58516"/>
        <dbReference type="EC" id="2.3.1.157"/>
    </reaction>
</comment>
<comment type="catalytic activity">
    <reaction evidence="1">
        <text>N-acetyl-alpha-D-glucosamine 1-phosphate + UTP + H(+) = UDP-N-acetyl-alpha-D-glucosamine + diphosphate</text>
        <dbReference type="Rhea" id="RHEA:13509"/>
        <dbReference type="ChEBI" id="CHEBI:15378"/>
        <dbReference type="ChEBI" id="CHEBI:33019"/>
        <dbReference type="ChEBI" id="CHEBI:46398"/>
        <dbReference type="ChEBI" id="CHEBI:57705"/>
        <dbReference type="ChEBI" id="CHEBI:57776"/>
        <dbReference type="EC" id="2.7.7.23"/>
    </reaction>
</comment>
<comment type="cofactor">
    <cofactor evidence="1">
        <name>Mg(2+)</name>
        <dbReference type="ChEBI" id="CHEBI:18420"/>
    </cofactor>
    <text evidence="1">Binds 1 Mg(2+) ion per subunit.</text>
</comment>
<comment type="pathway">
    <text evidence="1">Nucleotide-sugar biosynthesis; UDP-N-acetyl-alpha-D-glucosamine biosynthesis; N-acetyl-alpha-D-glucosamine 1-phosphate from alpha-D-glucosamine 6-phosphate (route II): step 2/2.</text>
</comment>
<comment type="pathway">
    <text evidence="1">Nucleotide-sugar biosynthesis; UDP-N-acetyl-alpha-D-glucosamine biosynthesis; UDP-N-acetyl-alpha-D-glucosamine from N-acetyl-alpha-D-glucosamine 1-phosphate: step 1/1.</text>
</comment>
<comment type="pathway">
    <text evidence="1">Bacterial outer membrane biogenesis; LPS lipid A biosynthesis.</text>
</comment>
<comment type="subunit">
    <text evidence="1">Homotrimer.</text>
</comment>
<comment type="subcellular location">
    <subcellularLocation>
        <location evidence="1">Cytoplasm</location>
    </subcellularLocation>
</comment>
<comment type="similarity">
    <text evidence="1">In the N-terminal section; belongs to the N-acetylglucosamine-1-phosphate uridyltransferase family.</text>
</comment>
<comment type="similarity">
    <text evidence="1">In the C-terminal section; belongs to the transferase hexapeptide repeat family.</text>
</comment>
<organism>
    <name type="scientific">Coxiella burnetii (strain CbuG_Q212)</name>
    <name type="common">Coxiella burnetii (strain Q212)</name>
    <dbReference type="NCBI Taxonomy" id="434923"/>
    <lineage>
        <taxon>Bacteria</taxon>
        <taxon>Pseudomonadati</taxon>
        <taxon>Pseudomonadota</taxon>
        <taxon>Gammaproteobacteria</taxon>
        <taxon>Legionellales</taxon>
        <taxon>Coxiellaceae</taxon>
        <taxon>Coxiella</taxon>
    </lineage>
</organism>
<sequence>MGLSVIILAAGQGKRMASSTPKILHPLGGIPLLERVVNTARLLNPHTIQVVYGNGGSHVREKLNYLPVHWIEQSQPLGTGHAVLQAIPFCQNEDRVLILYGDVPLISPKTLNSLLENTPSNGLGVVVAELPDPTGLGRIIRDDFGNILSIVEHKDAAEHQLKIREINTGIMTTTAMNLKKWLPQLNNNNCQKEYYLTDTVALAVAEGCPVGCVAAQCCEEVQGVNDRWELTKLERYYQRLMAKKLSLAGVTIIDPERFDARGENIEIAPDVVIDVNVILEGNVQLDRNVRIGPNVILKNTTVGENTEIHANSVIEAAVIKANCSVGPFARLRPGSVLEEGAKVGNFVEMKKTTLGRGSKANHLTYLGDTIIGKNVNVGAGTITCNYDGANKWQTKIEDGAFIGSNVALVAPLTVGKNATIGAGSTLSQDAPPDQLTVARERQRTIKGWHRPTKKE</sequence>
<gene>
    <name evidence="1" type="primary">glmU</name>
    <name type="ordered locus">CbuG_0058</name>
</gene>
<accession>B6J2E2</accession>
<dbReference type="EC" id="2.7.7.23" evidence="1"/>
<dbReference type="EC" id="2.3.1.157" evidence="1"/>
<dbReference type="EMBL" id="CP001019">
    <property type="protein sequence ID" value="ACJ17516.1"/>
    <property type="molecule type" value="Genomic_DNA"/>
</dbReference>
<dbReference type="RefSeq" id="WP_012569563.1">
    <property type="nucleotide sequence ID" value="NC_011527.1"/>
</dbReference>
<dbReference type="SMR" id="B6J2E2"/>
<dbReference type="KEGG" id="cbg:CbuG_0058"/>
<dbReference type="HOGENOM" id="CLU_029499_15_2_6"/>
<dbReference type="UniPathway" id="UPA00113">
    <property type="reaction ID" value="UER00532"/>
</dbReference>
<dbReference type="UniPathway" id="UPA00113">
    <property type="reaction ID" value="UER00533"/>
</dbReference>
<dbReference type="UniPathway" id="UPA00973"/>
<dbReference type="GO" id="GO:0005737">
    <property type="term" value="C:cytoplasm"/>
    <property type="evidence" value="ECO:0007669"/>
    <property type="project" value="UniProtKB-SubCell"/>
</dbReference>
<dbReference type="GO" id="GO:0016020">
    <property type="term" value="C:membrane"/>
    <property type="evidence" value="ECO:0007669"/>
    <property type="project" value="GOC"/>
</dbReference>
<dbReference type="GO" id="GO:0019134">
    <property type="term" value="F:glucosamine-1-phosphate N-acetyltransferase activity"/>
    <property type="evidence" value="ECO:0007669"/>
    <property type="project" value="UniProtKB-UniRule"/>
</dbReference>
<dbReference type="GO" id="GO:0000287">
    <property type="term" value="F:magnesium ion binding"/>
    <property type="evidence" value="ECO:0007669"/>
    <property type="project" value="UniProtKB-UniRule"/>
</dbReference>
<dbReference type="GO" id="GO:0003977">
    <property type="term" value="F:UDP-N-acetylglucosamine diphosphorylase activity"/>
    <property type="evidence" value="ECO:0007669"/>
    <property type="project" value="UniProtKB-UniRule"/>
</dbReference>
<dbReference type="GO" id="GO:0000902">
    <property type="term" value="P:cell morphogenesis"/>
    <property type="evidence" value="ECO:0007669"/>
    <property type="project" value="UniProtKB-UniRule"/>
</dbReference>
<dbReference type="GO" id="GO:0071555">
    <property type="term" value="P:cell wall organization"/>
    <property type="evidence" value="ECO:0007669"/>
    <property type="project" value="UniProtKB-KW"/>
</dbReference>
<dbReference type="GO" id="GO:0009245">
    <property type="term" value="P:lipid A biosynthetic process"/>
    <property type="evidence" value="ECO:0007669"/>
    <property type="project" value="UniProtKB-UniRule"/>
</dbReference>
<dbReference type="GO" id="GO:0009252">
    <property type="term" value="P:peptidoglycan biosynthetic process"/>
    <property type="evidence" value="ECO:0007669"/>
    <property type="project" value="UniProtKB-UniRule"/>
</dbReference>
<dbReference type="GO" id="GO:0008360">
    <property type="term" value="P:regulation of cell shape"/>
    <property type="evidence" value="ECO:0007669"/>
    <property type="project" value="UniProtKB-KW"/>
</dbReference>
<dbReference type="GO" id="GO:0006048">
    <property type="term" value="P:UDP-N-acetylglucosamine biosynthetic process"/>
    <property type="evidence" value="ECO:0007669"/>
    <property type="project" value="UniProtKB-UniPathway"/>
</dbReference>
<dbReference type="CDD" id="cd02540">
    <property type="entry name" value="GT2_GlmU_N_bac"/>
    <property type="match status" value="1"/>
</dbReference>
<dbReference type="CDD" id="cd03353">
    <property type="entry name" value="LbH_GlmU_C"/>
    <property type="match status" value="1"/>
</dbReference>
<dbReference type="Gene3D" id="2.160.10.10">
    <property type="entry name" value="Hexapeptide repeat proteins"/>
    <property type="match status" value="1"/>
</dbReference>
<dbReference type="Gene3D" id="3.90.550.10">
    <property type="entry name" value="Spore Coat Polysaccharide Biosynthesis Protein SpsA, Chain A"/>
    <property type="match status" value="1"/>
</dbReference>
<dbReference type="HAMAP" id="MF_01631">
    <property type="entry name" value="GlmU"/>
    <property type="match status" value="1"/>
</dbReference>
<dbReference type="InterPro" id="IPR005882">
    <property type="entry name" value="Bifunctional_GlmU"/>
</dbReference>
<dbReference type="InterPro" id="IPR050065">
    <property type="entry name" value="GlmU-like"/>
</dbReference>
<dbReference type="InterPro" id="IPR038009">
    <property type="entry name" value="GlmU_C_LbH"/>
</dbReference>
<dbReference type="InterPro" id="IPR001451">
    <property type="entry name" value="Hexapep"/>
</dbReference>
<dbReference type="InterPro" id="IPR018357">
    <property type="entry name" value="Hexapep_transf_CS"/>
</dbReference>
<dbReference type="InterPro" id="IPR025877">
    <property type="entry name" value="MobA-like_NTP_Trfase"/>
</dbReference>
<dbReference type="InterPro" id="IPR029044">
    <property type="entry name" value="Nucleotide-diphossugar_trans"/>
</dbReference>
<dbReference type="InterPro" id="IPR011004">
    <property type="entry name" value="Trimer_LpxA-like_sf"/>
</dbReference>
<dbReference type="NCBIfam" id="TIGR01173">
    <property type="entry name" value="glmU"/>
    <property type="match status" value="1"/>
</dbReference>
<dbReference type="PANTHER" id="PTHR43584:SF3">
    <property type="entry name" value="BIFUNCTIONAL PROTEIN GLMU"/>
    <property type="match status" value="1"/>
</dbReference>
<dbReference type="PANTHER" id="PTHR43584">
    <property type="entry name" value="NUCLEOTIDYL TRANSFERASE"/>
    <property type="match status" value="1"/>
</dbReference>
<dbReference type="Pfam" id="PF00132">
    <property type="entry name" value="Hexapep"/>
    <property type="match status" value="1"/>
</dbReference>
<dbReference type="Pfam" id="PF12804">
    <property type="entry name" value="NTP_transf_3"/>
    <property type="match status" value="1"/>
</dbReference>
<dbReference type="SUPFAM" id="SSF53448">
    <property type="entry name" value="Nucleotide-diphospho-sugar transferases"/>
    <property type="match status" value="1"/>
</dbReference>
<dbReference type="SUPFAM" id="SSF51161">
    <property type="entry name" value="Trimeric LpxA-like enzymes"/>
    <property type="match status" value="1"/>
</dbReference>
<dbReference type="PROSITE" id="PS00101">
    <property type="entry name" value="HEXAPEP_TRANSFERASES"/>
    <property type="match status" value="1"/>
</dbReference>
<evidence type="ECO:0000255" key="1">
    <source>
        <dbReference type="HAMAP-Rule" id="MF_01631"/>
    </source>
</evidence>
<keyword id="KW-0012">Acyltransferase</keyword>
<keyword id="KW-0133">Cell shape</keyword>
<keyword id="KW-0961">Cell wall biogenesis/degradation</keyword>
<keyword id="KW-0963">Cytoplasm</keyword>
<keyword id="KW-0460">Magnesium</keyword>
<keyword id="KW-0479">Metal-binding</keyword>
<keyword id="KW-0511">Multifunctional enzyme</keyword>
<keyword id="KW-0548">Nucleotidyltransferase</keyword>
<keyword id="KW-0573">Peptidoglycan synthesis</keyword>
<keyword id="KW-0677">Repeat</keyword>
<keyword id="KW-0808">Transferase</keyword>
<feature type="chain" id="PRO_1000186432" description="Bifunctional protein GlmU">
    <location>
        <begin position="1"/>
        <end position="455"/>
    </location>
</feature>
<feature type="region of interest" description="Pyrophosphorylase" evidence="1">
    <location>
        <begin position="1"/>
        <end position="227"/>
    </location>
</feature>
<feature type="region of interest" description="Linker" evidence="1">
    <location>
        <begin position="228"/>
        <end position="248"/>
    </location>
</feature>
<feature type="region of interest" description="N-acetyltransferase" evidence="1">
    <location>
        <begin position="249"/>
        <end position="455"/>
    </location>
</feature>
<feature type="active site" description="Proton acceptor" evidence="1">
    <location>
        <position position="362"/>
    </location>
</feature>
<feature type="binding site" evidence="1">
    <location>
        <begin position="8"/>
        <end position="11"/>
    </location>
    <ligand>
        <name>UDP-N-acetyl-alpha-D-glucosamine</name>
        <dbReference type="ChEBI" id="CHEBI:57705"/>
    </ligand>
</feature>
<feature type="binding site" evidence="1">
    <location>
        <position position="22"/>
    </location>
    <ligand>
        <name>UDP-N-acetyl-alpha-D-glucosamine</name>
        <dbReference type="ChEBI" id="CHEBI:57705"/>
    </ligand>
</feature>
<feature type="binding site" evidence="1">
    <location>
        <position position="73"/>
    </location>
    <ligand>
        <name>UDP-N-acetyl-alpha-D-glucosamine</name>
        <dbReference type="ChEBI" id="CHEBI:57705"/>
    </ligand>
</feature>
<feature type="binding site" evidence="1">
    <location>
        <begin position="78"/>
        <end position="79"/>
    </location>
    <ligand>
        <name>UDP-N-acetyl-alpha-D-glucosamine</name>
        <dbReference type="ChEBI" id="CHEBI:57705"/>
    </ligand>
</feature>
<feature type="binding site" evidence="1">
    <location>
        <begin position="100"/>
        <end position="102"/>
    </location>
    <ligand>
        <name>UDP-N-acetyl-alpha-D-glucosamine</name>
        <dbReference type="ChEBI" id="CHEBI:57705"/>
    </ligand>
</feature>
<feature type="binding site" evidence="1">
    <location>
        <position position="102"/>
    </location>
    <ligand>
        <name>Mg(2+)</name>
        <dbReference type="ChEBI" id="CHEBI:18420"/>
    </ligand>
</feature>
<feature type="binding site" evidence="1">
    <location>
        <position position="137"/>
    </location>
    <ligand>
        <name>UDP-N-acetyl-alpha-D-glucosamine</name>
        <dbReference type="ChEBI" id="CHEBI:57705"/>
    </ligand>
</feature>
<feature type="binding site" evidence="1">
    <location>
        <position position="152"/>
    </location>
    <ligand>
        <name>UDP-N-acetyl-alpha-D-glucosamine</name>
        <dbReference type="ChEBI" id="CHEBI:57705"/>
    </ligand>
</feature>
<feature type="binding site" evidence="1">
    <location>
        <position position="167"/>
    </location>
    <ligand>
        <name>UDP-N-acetyl-alpha-D-glucosamine</name>
        <dbReference type="ChEBI" id="CHEBI:57705"/>
    </ligand>
</feature>
<feature type="binding site" evidence="1">
    <location>
        <position position="225"/>
    </location>
    <ligand>
        <name>Mg(2+)</name>
        <dbReference type="ChEBI" id="CHEBI:18420"/>
    </ligand>
</feature>
<feature type="binding site" evidence="1">
    <location>
        <position position="225"/>
    </location>
    <ligand>
        <name>UDP-N-acetyl-alpha-D-glucosamine</name>
        <dbReference type="ChEBI" id="CHEBI:57705"/>
    </ligand>
</feature>
<feature type="binding site" evidence="1">
    <location>
        <position position="332"/>
    </location>
    <ligand>
        <name>UDP-N-acetyl-alpha-D-glucosamine</name>
        <dbReference type="ChEBI" id="CHEBI:57705"/>
    </ligand>
</feature>
<feature type="binding site" evidence="1">
    <location>
        <position position="350"/>
    </location>
    <ligand>
        <name>UDP-N-acetyl-alpha-D-glucosamine</name>
        <dbReference type="ChEBI" id="CHEBI:57705"/>
    </ligand>
</feature>
<feature type="binding site" evidence="1">
    <location>
        <position position="365"/>
    </location>
    <ligand>
        <name>UDP-N-acetyl-alpha-D-glucosamine</name>
        <dbReference type="ChEBI" id="CHEBI:57705"/>
    </ligand>
</feature>
<feature type="binding site" evidence="1">
    <location>
        <position position="376"/>
    </location>
    <ligand>
        <name>UDP-N-acetyl-alpha-D-glucosamine</name>
        <dbReference type="ChEBI" id="CHEBI:57705"/>
    </ligand>
</feature>
<feature type="binding site" evidence="1">
    <location>
        <position position="379"/>
    </location>
    <ligand>
        <name>acetyl-CoA</name>
        <dbReference type="ChEBI" id="CHEBI:57288"/>
    </ligand>
</feature>
<feature type="binding site" evidence="1">
    <location>
        <begin position="385"/>
        <end position="386"/>
    </location>
    <ligand>
        <name>acetyl-CoA</name>
        <dbReference type="ChEBI" id="CHEBI:57288"/>
    </ligand>
</feature>
<feature type="binding site" evidence="1">
    <location>
        <position position="404"/>
    </location>
    <ligand>
        <name>acetyl-CoA</name>
        <dbReference type="ChEBI" id="CHEBI:57288"/>
    </ligand>
</feature>
<feature type="binding site" evidence="1">
    <location>
        <position position="422"/>
    </location>
    <ligand>
        <name>acetyl-CoA</name>
        <dbReference type="ChEBI" id="CHEBI:57288"/>
    </ligand>
</feature>
<feature type="binding site" evidence="1">
    <location>
        <position position="439"/>
    </location>
    <ligand>
        <name>acetyl-CoA</name>
        <dbReference type="ChEBI" id="CHEBI:57288"/>
    </ligand>
</feature>
<protein>
    <recommendedName>
        <fullName evidence="1">Bifunctional protein GlmU</fullName>
    </recommendedName>
    <domain>
        <recommendedName>
            <fullName evidence="1">UDP-N-acetylglucosamine pyrophosphorylase</fullName>
            <ecNumber evidence="1">2.7.7.23</ecNumber>
        </recommendedName>
        <alternativeName>
            <fullName evidence="1">N-acetylglucosamine-1-phosphate uridyltransferase</fullName>
        </alternativeName>
    </domain>
    <domain>
        <recommendedName>
            <fullName evidence="1">Glucosamine-1-phosphate N-acetyltransferase</fullName>
            <ecNumber evidence="1">2.3.1.157</ecNumber>
        </recommendedName>
    </domain>
</protein>
<name>GLMU_COXB2</name>